<comment type="subunit">
    <text evidence="1">Homodimer and heterodimers.</text>
</comment>
<comment type="subcellular location">
    <subcellularLocation>
        <location evidence="1">Cell membrane</location>
        <topology evidence="1">Multi-pass membrane protein</topology>
    </subcellularLocation>
</comment>
<comment type="similarity">
    <text evidence="3">Belongs to the Casparian strip membrane proteins (CASP) family.</text>
</comment>
<dbReference type="EMBL" id="BT096608">
    <property type="protein sequence ID" value="ACU20814.1"/>
    <property type="molecule type" value="mRNA"/>
</dbReference>
<dbReference type="RefSeq" id="NP_001241476.1">
    <property type="nucleotide sequence ID" value="NM_001254547.3"/>
</dbReference>
<dbReference type="SMR" id="C6TG62"/>
<dbReference type="FunCoup" id="C6TG62">
    <property type="interactions" value="901"/>
</dbReference>
<dbReference type="PaxDb" id="3847-GLYMA05G30480.2"/>
<dbReference type="GeneID" id="100776930"/>
<dbReference type="KEGG" id="gmx:100776930"/>
<dbReference type="eggNOG" id="ENOG502RYH6">
    <property type="taxonomic scope" value="Eukaryota"/>
</dbReference>
<dbReference type="InParanoid" id="C6TG62"/>
<dbReference type="OrthoDB" id="610574at2759"/>
<dbReference type="Proteomes" id="UP000008827">
    <property type="component" value="Unplaced"/>
</dbReference>
<dbReference type="GO" id="GO:0005886">
    <property type="term" value="C:plasma membrane"/>
    <property type="evidence" value="ECO:0000318"/>
    <property type="project" value="GO_Central"/>
</dbReference>
<dbReference type="InterPro" id="IPR006459">
    <property type="entry name" value="CASP/CASPL"/>
</dbReference>
<dbReference type="InterPro" id="IPR006702">
    <property type="entry name" value="CASP_dom"/>
</dbReference>
<dbReference type="InterPro" id="IPR044173">
    <property type="entry name" value="CASPL"/>
</dbReference>
<dbReference type="NCBIfam" id="TIGR01569">
    <property type="entry name" value="A_tha_TIGR01569"/>
    <property type="match status" value="1"/>
</dbReference>
<dbReference type="PANTHER" id="PTHR36488">
    <property type="entry name" value="CASP-LIKE PROTEIN 1U1"/>
    <property type="match status" value="1"/>
</dbReference>
<dbReference type="PANTHER" id="PTHR36488:SF8">
    <property type="entry name" value="CASP-LIKE PROTEIN 1U1"/>
    <property type="match status" value="1"/>
</dbReference>
<dbReference type="Pfam" id="PF04535">
    <property type="entry name" value="CASP_dom"/>
    <property type="match status" value="1"/>
</dbReference>
<organism>
    <name type="scientific">Glycine max</name>
    <name type="common">Soybean</name>
    <name type="synonym">Glycine hispida</name>
    <dbReference type="NCBI Taxonomy" id="3847"/>
    <lineage>
        <taxon>Eukaryota</taxon>
        <taxon>Viridiplantae</taxon>
        <taxon>Streptophyta</taxon>
        <taxon>Embryophyta</taxon>
        <taxon>Tracheophyta</taxon>
        <taxon>Spermatophyta</taxon>
        <taxon>Magnoliopsida</taxon>
        <taxon>eudicotyledons</taxon>
        <taxon>Gunneridae</taxon>
        <taxon>Pentapetalae</taxon>
        <taxon>rosids</taxon>
        <taxon>fabids</taxon>
        <taxon>Fabales</taxon>
        <taxon>Fabaceae</taxon>
        <taxon>Papilionoideae</taxon>
        <taxon>50 kb inversion clade</taxon>
        <taxon>NPAAA clade</taxon>
        <taxon>indigoferoid/millettioid clade</taxon>
        <taxon>Phaseoleae</taxon>
        <taxon>Glycine</taxon>
        <taxon>Glycine subgen. Soja</taxon>
    </lineage>
</organism>
<feature type="chain" id="PRO_0000391572" description="CASP-like protein 1B1">
    <location>
        <begin position="1"/>
        <end position="194"/>
    </location>
</feature>
<feature type="topological domain" description="Cytoplasmic" evidence="2">
    <location>
        <begin position="1"/>
        <end position="24"/>
    </location>
</feature>
<feature type="transmembrane region" description="Helical" evidence="2">
    <location>
        <begin position="25"/>
        <end position="45"/>
    </location>
</feature>
<feature type="topological domain" description="Extracellular" evidence="2">
    <location>
        <begin position="46"/>
        <end position="77"/>
    </location>
</feature>
<feature type="transmembrane region" description="Helical" evidence="2">
    <location>
        <begin position="78"/>
        <end position="98"/>
    </location>
</feature>
<feature type="topological domain" description="Cytoplasmic" evidence="2">
    <location>
        <begin position="99"/>
        <end position="111"/>
    </location>
</feature>
<feature type="transmembrane region" description="Helical" evidence="2">
    <location>
        <begin position="112"/>
        <end position="132"/>
    </location>
</feature>
<feature type="topological domain" description="Extracellular" evidence="2">
    <location>
        <begin position="133"/>
        <end position="164"/>
    </location>
</feature>
<feature type="transmembrane region" description="Helical" evidence="2">
    <location>
        <begin position="165"/>
        <end position="185"/>
    </location>
</feature>
<feature type="topological domain" description="Cytoplasmic" evidence="2">
    <location>
        <begin position="186"/>
        <end position="194"/>
    </location>
</feature>
<accession>C6TG62</accession>
<protein>
    <recommendedName>
        <fullName>CASP-like protein 1B1</fullName>
        <shortName>GmCASPL1B1</shortName>
    </recommendedName>
</protein>
<sequence>MASENGDKLELAFSAVPDPKPKKDWVILSLRVVAFFATASATLVMAFNKQTKGMVVATIGTNPVTITLTAMFQHTPAFIFFVIVNAIASFYNLLVIGVEILGPQYDYKGLRLGLIAILDVMTMALAATGDGAATFMAELGRNGNSHARWDKICDKFEAYCNRGGVALVASFVGLILLLVVTVMSITKLLKLNRI</sequence>
<keyword id="KW-1003">Cell membrane</keyword>
<keyword id="KW-0472">Membrane</keyword>
<keyword id="KW-1185">Reference proteome</keyword>
<keyword id="KW-0812">Transmembrane</keyword>
<keyword id="KW-1133">Transmembrane helix</keyword>
<reference key="1">
    <citation type="submission" date="2009-08" db="EMBL/GenBank/DDBJ databases">
        <authorList>
            <person name="Cheung F."/>
            <person name="Xiao Y."/>
            <person name="Chan A."/>
            <person name="Moskal W."/>
            <person name="Town C.D."/>
        </authorList>
    </citation>
    <scope>NUCLEOTIDE SEQUENCE [LARGE SCALE MRNA]</scope>
</reference>
<reference key="2">
    <citation type="journal article" date="2014" name="Plant Physiol.">
        <title>Functional and evolutionary analysis of the CASPARIAN STRIP MEMBRANE DOMAIN PROTEIN family.</title>
        <authorList>
            <person name="Roppolo D."/>
            <person name="Boeckmann B."/>
            <person name="Pfister A."/>
            <person name="Boutet E."/>
            <person name="Rubio M.C."/>
            <person name="Denervaud-Tendon V."/>
            <person name="Vermeer J.E."/>
            <person name="Gheyselinck J."/>
            <person name="Xenarios I."/>
            <person name="Geldner N."/>
        </authorList>
    </citation>
    <scope>GENE FAMILY</scope>
    <scope>NOMENCLATURE</scope>
</reference>
<name>CSPL9_SOYBN</name>
<proteinExistence type="evidence at transcript level"/>
<evidence type="ECO:0000250" key="1"/>
<evidence type="ECO:0000255" key="2"/>
<evidence type="ECO:0000305" key="3"/>